<accession>A5FZV6</accession>
<proteinExistence type="inferred from homology"/>
<keyword id="KW-1185">Reference proteome</keyword>
<keyword id="KW-0687">Ribonucleoprotein</keyword>
<keyword id="KW-0689">Ribosomal protein</keyword>
<keyword id="KW-0694">RNA-binding</keyword>
<keyword id="KW-0699">rRNA-binding</keyword>
<sequence>MPKRVLTGRVVSDKMDKTVTVLVERRVMHPLYKKFIRRSKKYAAHDEGNVCAMGDLVRIEECPPISKRKAWLVTARNGEPVGAAAEAQGA</sequence>
<comment type="function">
    <text evidence="1">One of the primary rRNA binding proteins, it binds specifically to the 5'-end of 16S ribosomal RNA.</text>
</comment>
<comment type="subunit">
    <text evidence="1">Part of the 30S ribosomal subunit.</text>
</comment>
<comment type="similarity">
    <text evidence="1">Belongs to the universal ribosomal protein uS17 family.</text>
</comment>
<feature type="chain" id="PRO_1000054907" description="Small ribosomal subunit protein uS17">
    <location>
        <begin position="1"/>
        <end position="90"/>
    </location>
</feature>
<evidence type="ECO:0000255" key="1">
    <source>
        <dbReference type="HAMAP-Rule" id="MF_01345"/>
    </source>
</evidence>
<evidence type="ECO:0000305" key="2"/>
<organism>
    <name type="scientific">Acidiphilium cryptum (strain JF-5)</name>
    <dbReference type="NCBI Taxonomy" id="349163"/>
    <lineage>
        <taxon>Bacteria</taxon>
        <taxon>Pseudomonadati</taxon>
        <taxon>Pseudomonadota</taxon>
        <taxon>Alphaproteobacteria</taxon>
        <taxon>Acetobacterales</taxon>
        <taxon>Acidocellaceae</taxon>
        <taxon>Acidiphilium</taxon>
    </lineage>
</organism>
<protein>
    <recommendedName>
        <fullName evidence="1">Small ribosomal subunit protein uS17</fullName>
    </recommendedName>
    <alternativeName>
        <fullName evidence="2">30S ribosomal protein S17</fullName>
    </alternativeName>
</protein>
<dbReference type="EMBL" id="CP000697">
    <property type="protein sequence ID" value="ABQ31138.1"/>
    <property type="molecule type" value="Genomic_DNA"/>
</dbReference>
<dbReference type="RefSeq" id="WP_007424182.1">
    <property type="nucleotide sequence ID" value="NC_009484.1"/>
</dbReference>
<dbReference type="SMR" id="A5FZV6"/>
<dbReference type="STRING" id="349163.Acry_1937"/>
<dbReference type="KEGG" id="acr:Acry_1937"/>
<dbReference type="eggNOG" id="COG0186">
    <property type="taxonomic scope" value="Bacteria"/>
</dbReference>
<dbReference type="HOGENOM" id="CLU_073626_1_1_5"/>
<dbReference type="Proteomes" id="UP000000245">
    <property type="component" value="Chromosome"/>
</dbReference>
<dbReference type="GO" id="GO:0022627">
    <property type="term" value="C:cytosolic small ribosomal subunit"/>
    <property type="evidence" value="ECO:0007669"/>
    <property type="project" value="TreeGrafter"/>
</dbReference>
<dbReference type="GO" id="GO:0019843">
    <property type="term" value="F:rRNA binding"/>
    <property type="evidence" value="ECO:0007669"/>
    <property type="project" value="UniProtKB-UniRule"/>
</dbReference>
<dbReference type="GO" id="GO:0003735">
    <property type="term" value="F:structural constituent of ribosome"/>
    <property type="evidence" value="ECO:0007669"/>
    <property type="project" value="InterPro"/>
</dbReference>
<dbReference type="GO" id="GO:0006412">
    <property type="term" value="P:translation"/>
    <property type="evidence" value="ECO:0007669"/>
    <property type="project" value="UniProtKB-UniRule"/>
</dbReference>
<dbReference type="CDD" id="cd00364">
    <property type="entry name" value="Ribosomal_uS17"/>
    <property type="match status" value="1"/>
</dbReference>
<dbReference type="Gene3D" id="2.40.50.140">
    <property type="entry name" value="Nucleic acid-binding proteins"/>
    <property type="match status" value="1"/>
</dbReference>
<dbReference type="HAMAP" id="MF_01345_B">
    <property type="entry name" value="Ribosomal_uS17_B"/>
    <property type="match status" value="1"/>
</dbReference>
<dbReference type="InterPro" id="IPR012340">
    <property type="entry name" value="NA-bd_OB-fold"/>
</dbReference>
<dbReference type="InterPro" id="IPR000266">
    <property type="entry name" value="Ribosomal_uS17"/>
</dbReference>
<dbReference type="InterPro" id="IPR019984">
    <property type="entry name" value="Ribosomal_uS17_bact/chlr"/>
</dbReference>
<dbReference type="NCBIfam" id="NF004123">
    <property type="entry name" value="PRK05610.1"/>
    <property type="match status" value="1"/>
</dbReference>
<dbReference type="NCBIfam" id="TIGR03635">
    <property type="entry name" value="uS17_bact"/>
    <property type="match status" value="1"/>
</dbReference>
<dbReference type="PANTHER" id="PTHR10744">
    <property type="entry name" value="40S RIBOSOMAL PROTEIN S11 FAMILY MEMBER"/>
    <property type="match status" value="1"/>
</dbReference>
<dbReference type="PANTHER" id="PTHR10744:SF1">
    <property type="entry name" value="SMALL RIBOSOMAL SUBUNIT PROTEIN US17M"/>
    <property type="match status" value="1"/>
</dbReference>
<dbReference type="Pfam" id="PF00366">
    <property type="entry name" value="Ribosomal_S17"/>
    <property type="match status" value="1"/>
</dbReference>
<dbReference type="PRINTS" id="PR00973">
    <property type="entry name" value="RIBOSOMALS17"/>
</dbReference>
<dbReference type="SUPFAM" id="SSF50249">
    <property type="entry name" value="Nucleic acid-binding proteins"/>
    <property type="match status" value="1"/>
</dbReference>
<name>RS17_ACICJ</name>
<gene>
    <name evidence="1" type="primary">rpsQ</name>
    <name type="ordered locus">Acry_1937</name>
</gene>
<reference key="1">
    <citation type="submission" date="2007-05" db="EMBL/GenBank/DDBJ databases">
        <title>Complete sequence of chromosome of Acidiphilium cryptum JF-5.</title>
        <authorList>
            <consortium name="US DOE Joint Genome Institute"/>
            <person name="Copeland A."/>
            <person name="Lucas S."/>
            <person name="Lapidus A."/>
            <person name="Barry K."/>
            <person name="Detter J.C."/>
            <person name="Glavina del Rio T."/>
            <person name="Hammon N."/>
            <person name="Israni S."/>
            <person name="Dalin E."/>
            <person name="Tice H."/>
            <person name="Pitluck S."/>
            <person name="Sims D."/>
            <person name="Brettin T."/>
            <person name="Bruce D."/>
            <person name="Han C."/>
            <person name="Schmutz J."/>
            <person name="Larimer F."/>
            <person name="Land M."/>
            <person name="Hauser L."/>
            <person name="Kyrpides N."/>
            <person name="Kim E."/>
            <person name="Magnuson T."/>
            <person name="Richardson P."/>
        </authorList>
    </citation>
    <scope>NUCLEOTIDE SEQUENCE [LARGE SCALE GENOMIC DNA]</scope>
    <source>
        <strain>JF-5</strain>
    </source>
</reference>